<proteinExistence type="evidence at protein level"/>
<sequence length="443" mass="48499">MLRAPRTLAPATAQPTKSLPALNPTELWPSGLSSPQLCPATTATTYYTSLYTQTVPSSVALGTCLDATPHGPEGQIVRCAPAGRLPAKRKLDLEGIGRPTVPEFRTPKGKCIRVDGLPSPKTPKSPGEKTRYDTSLGLLTKKFIYLLSESEDGVLDLNWAAEVLDVQKRRIYDITNVLEGIQLIRKKSKNNIQWVGRELFEDPTRPSRQQQLGQELKELMNAEQTLDQLIQSCSLSFKHLTEDNANKKLAYVTYQDIRAVGNFKEQTVIAVKAPPQTRLEVPDRAEENLQIYLKSTQGPIEVYLCPEEGQEPDSPAKEALPSTSALSPIPDCAQPGCSTDSGIAETIEPSVLIPQPIPPPPPPPLPPAPSLVPLEATDNMLELSHPLLQQTEDQFLSPILAANSPLISFSPPLDQDEYLWGMDEGEGISDLFDSYDLGDLLIN</sequence>
<comment type="function">
    <text>Transcription activator that binds DNA cooperatively with DP proteins through the E2 recognition site, 5'-TTTC[CG]CGC-3' found in the promoter region of a number of genes whose products are involved in cell cycle regulation or in DNA replication. The DRTF1/E2F complex functions in the control of cell-cycle progression from g1 to s phase. E2F2 binds specifically to RB1 in a cell-cycle dependent manner.</text>
</comment>
<comment type="subunit">
    <text>Component of the DRTF1/E2F transcription factor complex. Forms heterodimers with DP family members. The E2F2 complex binds specifically hypophosphorylated retinoblastoma protein RB1. During the cell cycle, RB1 becomes phosphorylated in mid-to-late G1 phase, detaches from the DRTF1/E2F complex, rendering E2F transcriptionally active. Viral oncoproteins, notably E1A, T-antigen and HPV E7, are capable of sequestering RB protein, thus releasing the active complex. Binds EAPP.</text>
</comment>
<comment type="subcellular location">
    <subcellularLocation>
        <location>Nucleus</location>
    </subcellularLocation>
</comment>
<comment type="developmental stage">
    <text evidence="4 5">Expressed in the developing epidermis and intestinal epithelium. First detected in the epidermis at stage 13.5-14.5 dpc with higher levels in the head and thorax regions. At 15.5 dpc, expression is found in both the epithelium and, to a lesser extent in the underlying mesenchyme. At day 16.5 dpc, high expression in the basal cells. Later expression is found in the developing hair follicles, around the dermal papillae. In the developing intestinal epithelium, expression first observed around 14.5 dpc. Levels continue to increase at least until 19.5 dpc, with highest levels in the intervillus epithelium and in the bottom half of the villi. In the nervous system, first expressed at 9.5 dpc, in the forebrain. At 10.5 dpc, expressed broadly in the brain, and at lower levels in the upper regions of the spinal cord. By 11.5 dpc, E2F2 expression is found throughout the central nervous system and levels peak at 12.5-15.5 dpc. In the developing spinal cord, E2F2 expression found only in the dorsal region. In the developing retina, highest expression found in the 14.5-18.5 dpc embryonic retinoblastic cell layer. In other developing tissues, E2F2 is found highest in thymus and liver, with lower expression in lung, heart, kidney and skeletal muscle. Also found in choroid plexus and chondrocytes.</text>
</comment>
<comment type="PTM">
    <text evidence="1">Phosphorylated by CDK2 and cyclin A-CDK2 in the S-phase.</text>
</comment>
<comment type="similarity">
    <text evidence="6">Belongs to the E2F/DP family.</text>
</comment>
<feature type="chain" id="PRO_0000219465" description="Transcription factor E2F2">
    <location>
        <begin position="1"/>
        <end position="443"/>
    </location>
</feature>
<feature type="DNA-binding region" evidence="2">
    <location>
        <begin position="109"/>
        <end position="198"/>
    </location>
</feature>
<feature type="region of interest" description="Disordered" evidence="3">
    <location>
        <begin position="1"/>
        <end position="22"/>
    </location>
</feature>
<feature type="region of interest" description="Cyclin A/CDK2 binding" evidence="2">
    <location>
        <begin position="67"/>
        <end position="107"/>
    </location>
</feature>
<feature type="region of interest" description="Leucine-zipper">
    <location>
        <begin position="157"/>
        <end position="178"/>
    </location>
</feature>
<feature type="region of interest" description="Dimerization" evidence="2">
    <location>
        <begin position="199"/>
        <end position="291"/>
    </location>
</feature>
<feature type="region of interest" description="Disordered" evidence="3">
    <location>
        <begin position="306"/>
        <end position="341"/>
    </location>
</feature>
<feature type="region of interest" description="Transactivation" evidence="2">
    <location>
        <begin position="361"/>
        <end position="443"/>
    </location>
</feature>
<feature type="region of interest" description="Retinoblastoma protein binding" evidence="2">
    <location>
        <begin position="416"/>
        <end position="433"/>
    </location>
</feature>
<feature type="short sequence motif" description="DEF box">
    <location>
        <begin position="162"/>
        <end position="198"/>
    </location>
</feature>
<keyword id="KW-0010">Activator</keyword>
<keyword id="KW-0131">Cell cycle</keyword>
<keyword id="KW-0238">DNA-binding</keyword>
<keyword id="KW-0539">Nucleus</keyword>
<keyword id="KW-0597">Phosphoprotein</keyword>
<keyword id="KW-1185">Reference proteome</keyword>
<keyword id="KW-0804">Transcription</keyword>
<keyword id="KW-0805">Transcription regulation</keyword>
<gene>
    <name type="primary">E2f2</name>
</gene>
<accession>P56931</accession>
<accession>A2AW43</accession>
<accession>Q8BID0</accession>
<name>E2F2_MOUSE</name>
<dbReference type="EMBL" id="AK087452">
    <property type="protein sequence ID" value="BAC39881.1"/>
    <property type="molecule type" value="mRNA"/>
</dbReference>
<dbReference type="EMBL" id="AL935264">
    <property type="status" value="NOT_ANNOTATED_CDS"/>
    <property type="molecule type" value="Genomic_DNA"/>
</dbReference>
<dbReference type="EMBL" id="BC062101">
    <property type="protein sequence ID" value="AAH62101.1"/>
    <property type="molecule type" value="mRNA"/>
</dbReference>
<dbReference type="CCDS" id="CCDS18801.1"/>
<dbReference type="RefSeq" id="NP_001292328.1">
    <property type="nucleotide sequence ID" value="NM_001305399.1"/>
</dbReference>
<dbReference type="RefSeq" id="NP_808401.1">
    <property type="nucleotide sequence ID" value="NM_177733.7"/>
</dbReference>
<dbReference type="SMR" id="P56931"/>
<dbReference type="BioGRID" id="232447">
    <property type="interactions" value="3"/>
</dbReference>
<dbReference type="ComplexPortal" id="CPX-176">
    <property type="entry name" value="E2F2-DP1 transcription factor complex"/>
</dbReference>
<dbReference type="ComplexPortal" id="CPX-177">
    <property type="entry name" value="RB1-E2F2-DP1 transcription repressor complex"/>
</dbReference>
<dbReference type="CORUM" id="P56931"/>
<dbReference type="DIP" id="DIP-48416N"/>
<dbReference type="FunCoup" id="P56931">
    <property type="interactions" value="2390"/>
</dbReference>
<dbReference type="IntAct" id="P56931">
    <property type="interactions" value="3"/>
</dbReference>
<dbReference type="STRING" id="10090.ENSMUSP00000050047"/>
<dbReference type="iPTMnet" id="P56931"/>
<dbReference type="PhosphoSitePlus" id="P56931"/>
<dbReference type="jPOST" id="P56931"/>
<dbReference type="PaxDb" id="10090-ENSMUSP00000050047"/>
<dbReference type="ProteomicsDB" id="277699"/>
<dbReference type="Antibodypedia" id="4274">
    <property type="antibodies" value="349 antibodies from 36 providers"/>
</dbReference>
<dbReference type="DNASU" id="242705"/>
<dbReference type="Ensembl" id="ENSMUST00000061721.6">
    <property type="protein sequence ID" value="ENSMUSP00000050047.6"/>
    <property type="gene ID" value="ENSMUSG00000018983.10"/>
</dbReference>
<dbReference type="GeneID" id="242705"/>
<dbReference type="KEGG" id="mmu:242705"/>
<dbReference type="UCSC" id="uc008vht.3">
    <property type="organism name" value="mouse"/>
</dbReference>
<dbReference type="AGR" id="MGI:1096341"/>
<dbReference type="CTD" id="1870"/>
<dbReference type="MGI" id="MGI:1096341">
    <property type="gene designation" value="E2f2"/>
</dbReference>
<dbReference type="VEuPathDB" id="HostDB:ENSMUSG00000018983"/>
<dbReference type="eggNOG" id="KOG2577">
    <property type="taxonomic scope" value="Eukaryota"/>
</dbReference>
<dbReference type="GeneTree" id="ENSGT00940000160992"/>
<dbReference type="HOGENOM" id="CLU_032091_0_0_1"/>
<dbReference type="InParanoid" id="P56931"/>
<dbReference type="OMA" id="WVGRGIF"/>
<dbReference type="OrthoDB" id="1743261at2759"/>
<dbReference type="PhylomeDB" id="P56931"/>
<dbReference type="TreeFam" id="TF105566"/>
<dbReference type="Reactome" id="R-MMU-69231">
    <property type="pathway name" value="Cyclin D associated events in G1"/>
</dbReference>
<dbReference type="BioGRID-ORCS" id="242705">
    <property type="hits" value="7 hits in 62 CRISPR screens"/>
</dbReference>
<dbReference type="ChiTaRS" id="E2f2">
    <property type="organism name" value="mouse"/>
</dbReference>
<dbReference type="PRO" id="PR:P56931"/>
<dbReference type="Proteomes" id="UP000000589">
    <property type="component" value="Chromosome 4"/>
</dbReference>
<dbReference type="RNAct" id="P56931">
    <property type="molecule type" value="protein"/>
</dbReference>
<dbReference type="Bgee" id="ENSMUSG00000018983">
    <property type="expression patterns" value="Expressed in blood and 168 other cell types or tissues"/>
</dbReference>
<dbReference type="GO" id="GO:0005634">
    <property type="term" value="C:nucleus"/>
    <property type="evidence" value="ECO:0000314"/>
    <property type="project" value="MGI"/>
</dbReference>
<dbReference type="GO" id="GO:0035189">
    <property type="term" value="C:Rb-E2F complex"/>
    <property type="evidence" value="ECO:0000250"/>
    <property type="project" value="ComplexPortal"/>
</dbReference>
<dbReference type="GO" id="GO:0090575">
    <property type="term" value="C:RNA polymerase II transcription regulator complex"/>
    <property type="evidence" value="ECO:0000250"/>
    <property type="project" value="ComplexPortal"/>
</dbReference>
<dbReference type="GO" id="GO:0001228">
    <property type="term" value="F:DNA-binding transcription activator activity, RNA polymerase II-specific"/>
    <property type="evidence" value="ECO:0007669"/>
    <property type="project" value="Ensembl"/>
</dbReference>
<dbReference type="GO" id="GO:0003700">
    <property type="term" value="F:DNA-binding transcription factor activity"/>
    <property type="evidence" value="ECO:0000314"/>
    <property type="project" value="MGI"/>
</dbReference>
<dbReference type="GO" id="GO:0046983">
    <property type="term" value="F:protein dimerization activity"/>
    <property type="evidence" value="ECO:0007669"/>
    <property type="project" value="InterPro"/>
</dbReference>
<dbReference type="GO" id="GO:0000978">
    <property type="term" value="F:RNA polymerase II cis-regulatory region sequence-specific DNA binding"/>
    <property type="evidence" value="ECO:0007669"/>
    <property type="project" value="InterPro"/>
</dbReference>
<dbReference type="GO" id="GO:0072332">
    <property type="term" value="P:intrinsic apoptotic signaling pathway by p53 class mediator"/>
    <property type="evidence" value="ECO:0000314"/>
    <property type="project" value="MGI"/>
</dbReference>
<dbReference type="GO" id="GO:1990086">
    <property type="term" value="P:lens fiber cell apoptotic process"/>
    <property type="evidence" value="ECO:0000314"/>
    <property type="project" value="MGI"/>
</dbReference>
<dbReference type="GO" id="GO:1903671">
    <property type="term" value="P:negative regulation of sprouting angiogenesis"/>
    <property type="evidence" value="ECO:0007669"/>
    <property type="project" value="Ensembl"/>
</dbReference>
<dbReference type="GO" id="GO:0051726">
    <property type="term" value="P:regulation of cell cycle"/>
    <property type="evidence" value="ECO:0000314"/>
    <property type="project" value="MGI"/>
</dbReference>
<dbReference type="GO" id="GO:0006355">
    <property type="term" value="P:regulation of DNA-templated transcription"/>
    <property type="evidence" value="ECO:0000314"/>
    <property type="project" value="MGI"/>
</dbReference>
<dbReference type="CDD" id="cd14660">
    <property type="entry name" value="E2F_DD"/>
    <property type="match status" value="1"/>
</dbReference>
<dbReference type="FunFam" id="1.10.10.10:FF:000008">
    <property type="entry name" value="E2F transcription factor 1"/>
    <property type="match status" value="1"/>
</dbReference>
<dbReference type="Gene3D" id="6.10.250.540">
    <property type="match status" value="1"/>
</dbReference>
<dbReference type="Gene3D" id="1.10.10.10">
    <property type="entry name" value="Winged helix-like DNA-binding domain superfamily/Winged helix DNA-binding domain"/>
    <property type="match status" value="1"/>
</dbReference>
<dbReference type="InterPro" id="IPR015633">
    <property type="entry name" value="E2F"/>
</dbReference>
<dbReference type="InterPro" id="IPR037241">
    <property type="entry name" value="E2F-DP_heterodim"/>
</dbReference>
<dbReference type="InterPro" id="IPR032198">
    <property type="entry name" value="E2F_CC-MB"/>
</dbReference>
<dbReference type="InterPro" id="IPR003316">
    <property type="entry name" value="E2F_WHTH_DNA-bd_dom"/>
</dbReference>
<dbReference type="InterPro" id="IPR036388">
    <property type="entry name" value="WH-like_DNA-bd_sf"/>
</dbReference>
<dbReference type="InterPro" id="IPR036390">
    <property type="entry name" value="WH_DNA-bd_sf"/>
</dbReference>
<dbReference type="PANTHER" id="PTHR12081">
    <property type="entry name" value="TRANSCRIPTION FACTOR E2F"/>
    <property type="match status" value="1"/>
</dbReference>
<dbReference type="PANTHER" id="PTHR12081:SF50">
    <property type="entry name" value="TRANSCRIPTION FACTOR E2F2"/>
    <property type="match status" value="1"/>
</dbReference>
<dbReference type="Pfam" id="PF16421">
    <property type="entry name" value="E2F_CC-MB"/>
    <property type="match status" value="1"/>
</dbReference>
<dbReference type="Pfam" id="PF02319">
    <property type="entry name" value="E2F_TDP"/>
    <property type="match status" value="1"/>
</dbReference>
<dbReference type="SMART" id="SM01372">
    <property type="entry name" value="E2F_TDP"/>
    <property type="match status" value="1"/>
</dbReference>
<dbReference type="SUPFAM" id="SSF144074">
    <property type="entry name" value="E2F-DP heterodimerization region"/>
    <property type="match status" value="1"/>
</dbReference>
<dbReference type="SUPFAM" id="SSF46785">
    <property type="entry name" value="Winged helix' DNA-binding domain"/>
    <property type="match status" value="1"/>
</dbReference>
<organism>
    <name type="scientific">Mus musculus</name>
    <name type="common">Mouse</name>
    <dbReference type="NCBI Taxonomy" id="10090"/>
    <lineage>
        <taxon>Eukaryota</taxon>
        <taxon>Metazoa</taxon>
        <taxon>Chordata</taxon>
        <taxon>Craniata</taxon>
        <taxon>Vertebrata</taxon>
        <taxon>Euteleostomi</taxon>
        <taxon>Mammalia</taxon>
        <taxon>Eutheria</taxon>
        <taxon>Euarchontoglires</taxon>
        <taxon>Glires</taxon>
        <taxon>Rodentia</taxon>
        <taxon>Myomorpha</taxon>
        <taxon>Muroidea</taxon>
        <taxon>Muridae</taxon>
        <taxon>Murinae</taxon>
        <taxon>Mus</taxon>
        <taxon>Mus</taxon>
    </lineage>
</organism>
<protein>
    <recommendedName>
        <fullName>Transcription factor E2F2</fullName>
        <shortName>E2F-2</shortName>
    </recommendedName>
</protein>
<evidence type="ECO:0000250" key="1"/>
<evidence type="ECO:0000255" key="2"/>
<evidence type="ECO:0000256" key="3">
    <source>
        <dbReference type="SAM" id="MobiDB-lite"/>
    </source>
</evidence>
<evidence type="ECO:0000269" key="4">
    <source>
    </source>
</evidence>
<evidence type="ECO:0000269" key="5">
    <source>
    </source>
</evidence>
<evidence type="ECO:0000305" key="6"/>
<reference key="1">
    <citation type="journal article" date="2005" name="Science">
        <title>The transcriptional landscape of the mammalian genome.</title>
        <authorList>
            <person name="Carninci P."/>
            <person name="Kasukawa T."/>
            <person name="Katayama S."/>
            <person name="Gough J."/>
            <person name="Frith M.C."/>
            <person name="Maeda N."/>
            <person name="Oyama R."/>
            <person name="Ravasi T."/>
            <person name="Lenhard B."/>
            <person name="Wells C."/>
            <person name="Kodzius R."/>
            <person name="Shimokawa K."/>
            <person name="Bajic V.B."/>
            <person name="Brenner S.E."/>
            <person name="Batalov S."/>
            <person name="Forrest A.R."/>
            <person name="Zavolan M."/>
            <person name="Davis M.J."/>
            <person name="Wilming L.G."/>
            <person name="Aidinis V."/>
            <person name="Allen J.E."/>
            <person name="Ambesi-Impiombato A."/>
            <person name="Apweiler R."/>
            <person name="Aturaliya R.N."/>
            <person name="Bailey T.L."/>
            <person name="Bansal M."/>
            <person name="Baxter L."/>
            <person name="Beisel K.W."/>
            <person name="Bersano T."/>
            <person name="Bono H."/>
            <person name="Chalk A.M."/>
            <person name="Chiu K.P."/>
            <person name="Choudhary V."/>
            <person name="Christoffels A."/>
            <person name="Clutterbuck D.R."/>
            <person name="Crowe M.L."/>
            <person name="Dalla E."/>
            <person name="Dalrymple B.P."/>
            <person name="de Bono B."/>
            <person name="Della Gatta G."/>
            <person name="di Bernardo D."/>
            <person name="Down T."/>
            <person name="Engstrom P."/>
            <person name="Fagiolini M."/>
            <person name="Faulkner G."/>
            <person name="Fletcher C.F."/>
            <person name="Fukushima T."/>
            <person name="Furuno M."/>
            <person name="Futaki S."/>
            <person name="Gariboldi M."/>
            <person name="Georgii-Hemming P."/>
            <person name="Gingeras T.R."/>
            <person name="Gojobori T."/>
            <person name="Green R.E."/>
            <person name="Gustincich S."/>
            <person name="Harbers M."/>
            <person name="Hayashi Y."/>
            <person name="Hensch T.K."/>
            <person name="Hirokawa N."/>
            <person name="Hill D."/>
            <person name="Huminiecki L."/>
            <person name="Iacono M."/>
            <person name="Ikeo K."/>
            <person name="Iwama A."/>
            <person name="Ishikawa T."/>
            <person name="Jakt M."/>
            <person name="Kanapin A."/>
            <person name="Katoh M."/>
            <person name="Kawasawa Y."/>
            <person name="Kelso J."/>
            <person name="Kitamura H."/>
            <person name="Kitano H."/>
            <person name="Kollias G."/>
            <person name="Krishnan S.P."/>
            <person name="Kruger A."/>
            <person name="Kummerfeld S.K."/>
            <person name="Kurochkin I.V."/>
            <person name="Lareau L.F."/>
            <person name="Lazarevic D."/>
            <person name="Lipovich L."/>
            <person name="Liu J."/>
            <person name="Liuni S."/>
            <person name="McWilliam S."/>
            <person name="Madan Babu M."/>
            <person name="Madera M."/>
            <person name="Marchionni L."/>
            <person name="Matsuda H."/>
            <person name="Matsuzawa S."/>
            <person name="Miki H."/>
            <person name="Mignone F."/>
            <person name="Miyake S."/>
            <person name="Morris K."/>
            <person name="Mottagui-Tabar S."/>
            <person name="Mulder N."/>
            <person name="Nakano N."/>
            <person name="Nakauchi H."/>
            <person name="Ng P."/>
            <person name="Nilsson R."/>
            <person name="Nishiguchi S."/>
            <person name="Nishikawa S."/>
            <person name="Nori F."/>
            <person name="Ohara O."/>
            <person name="Okazaki Y."/>
            <person name="Orlando V."/>
            <person name="Pang K.C."/>
            <person name="Pavan W.J."/>
            <person name="Pavesi G."/>
            <person name="Pesole G."/>
            <person name="Petrovsky N."/>
            <person name="Piazza S."/>
            <person name="Reed J."/>
            <person name="Reid J.F."/>
            <person name="Ring B.Z."/>
            <person name="Ringwald M."/>
            <person name="Rost B."/>
            <person name="Ruan Y."/>
            <person name="Salzberg S.L."/>
            <person name="Sandelin A."/>
            <person name="Schneider C."/>
            <person name="Schoenbach C."/>
            <person name="Sekiguchi K."/>
            <person name="Semple C.A."/>
            <person name="Seno S."/>
            <person name="Sessa L."/>
            <person name="Sheng Y."/>
            <person name="Shibata Y."/>
            <person name="Shimada H."/>
            <person name="Shimada K."/>
            <person name="Silva D."/>
            <person name="Sinclair B."/>
            <person name="Sperling S."/>
            <person name="Stupka E."/>
            <person name="Sugiura K."/>
            <person name="Sultana R."/>
            <person name="Takenaka Y."/>
            <person name="Taki K."/>
            <person name="Tammoja K."/>
            <person name="Tan S.L."/>
            <person name="Tang S."/>
            <person name="Taylor M.S."/>
            <person name="Tegner J."/>
            <person name="Teichmann S.A."/>
            <person name="Ueda H.R."/>
            <person name="van Nimwegen E."/>
            <person name="Verardo R."/>
            <person name="Wei C.L."/>
            <person name="Yagi K."/>
            <person name="Yamanishi H."/>
            <person name="Zabarovsky E."/>
            <person name="Zhu S."/>
            <person name="Zimmer A."/>
            <person name="Hide W."/>
            <person name="Bult C."/>
            <person name="Grimmond S.M."/>
            <person name="Teasdale R.D."/>
            <person name="Liu E.T."/>
            <person name="Brusic V."/>
            <person name="Quackenbush J."/>
            <person name="Wahlestedt C."/>
            <person name="Mattick J.S."/>
            <person name="Hume D.A."/>
            <person name="Kai C."/>
            <person name="Sasaki D."/>
            <person name="Tomaru Y."/>
            <person name="Fukuda S."/>
            <person name="Kanamori-Katayama M."/>
            <person name="Suzuki M."/>
            <person name="Aoki J."/>
            <person name="Arakawa T."/>
            <person name="Iida J."/>
            <person name="Imamura K."/>
            <person name="Itoh M."/>
            <person name="Kato T."/>
            <person name="Kawaji H."/>
            <person name="Kawagashira N."/>
            <person name="Kawashima T."/>
            <person name="Kojima M."/>
            <person name="Kondo S."/>
            <person name="Konno H."/>
            <person name="Nakano K."/>
            <person name="Ninomiya N."/>
            <person name="Nishio T."/>
            <person name="Okada M."/>
            <person name="Plessy C."/>
            <person name="Shibata K."/>
            <person name="Shiraki T."/>
            <person name="Suzuki S."/>
            <person name="Tagami M."/>
            <person name="Waki K."/>
            <person name="Watahiki A."/>
            <person name="Okamura-Oho Y."/>
            <person name="Suzuki H."/>
            <person name="Kawai J."/>
            <person name="Hayashizaki Y."/>
        </authorList>
    </citation>
    <scope>NUCLEOTIDE SEQUENCE [LARGE SCALE MRNA]</scope>
    <source>
        <strain>C57BL/6J</strain>
        <tissue>Eye</tissue>
    </source>
</reference>
<reference key="2">
    <citation type="journal article" date="2009" name="PLoS Biol.">
        <title>Lineage-specific biology revealed by a finished genome assembly of the mouse.</title>
        <authorList>
            <person name="Church D.M."/>
            <person name="Goodstadt L."/>
            <person name="Hillier L.W."/>
            <person name="Zody M.C."/>
            <person name="Goldstein S."/>
            <person name="She X."/>
            <person name="Bult C.J."/>
            <person name="Agarwala R."/>
            <person name="Cherry J.L."/>
            <person name="DiCuccio M."/>
            <person name="Hlavina W."/>
            <person name="Kapustin Y."/>
            <person name="Meric P."/>
            <person name="Maglott D."/>
            <person name="Birtle Z."/>
            <person name="Marques A.C."/>
            <person name="Graves T."/>
            <person name="Zhou S."/>
            <person name="Teague B."/>
            <person name="Potamousis K."/>
            <person name="Churas C."/>
            <person name="Place M."/>
            <person name="Herschleb J."/>
            <person name="Runnheim R."/>
            <person name="Forrest D."/>
            <person name="Amos-Landgraf J."/>
            <person name="Schwartz D.C."/>
            <person name="Cheng Z."/>
            <person name="Lindblad-Toh K."/>
            <person name="Eichler E.E."/>
            <person name="Ponting C.P."/>
        </authorList>
    </citation>
    <scope>NUCLEOTIDE SEQUENCE [LARGE SCALE GENOMIC DNA]</scope>
    <source>
        <strain>C57BL/6J</strain>
    </source>
</reference>
<reference key="3">
    <citation type="journal article" date="2004" name="Genome Res.">
        <title>The status, quality, and expansion of the NIH full-length cDNA project: the Mammalian Gene Collection (MGC).</title>
        <authorList>
            <consortium name="The MGC Project Team"/>
        </authorList>
    </citation>
    <scope>NUCLEOTIDE SEQUENCE [LARGE SCALE MRNA]</scope>
    <source>
        <strain>C57BL/6J</strain>
        <tissue>Brain</tissue>
    </source>
</reference>
<reference key="4">
    <citation type="journal article" date="1997" name="Cell Growth Differ.">
        <title>Expression patterns of the E2F family of transcription factors during murine epithelial development.</title>
        <authorList>
            <person name="Dagnino L."/>
            <person name="Fry C.J."/>
            <person name="Bartley S.M."/>
            <person name="Farnham P."/>
            <person name="Gallie B.L."/>
            <person name="Phillips R.A."/>
        </authorList>
    </citation>
    <scope>PRELIMINARY NUCLEOTIDE SEQUENCE OF 49-254</scope>
    <scope>DEVELOPMENTAL STAGE</scope>
    <source>
        <tissue>Embryo</tissue>
    </source>
</reference>
<reference key="5">
    <citation type="journal article" date="1997" name="Mech. Dev.">
        <title>Expression patterns of the E2F family of transcription factors during mouse nervous system development.</title>
        <authorList>
            <person name="Dagnino L."/>
            <person name="Fry C.J."/>
            <person name="Bartley S.M."/>
            <person name="Farnham P."/>
            <person name="Gallie B.L."/>
            <person name="Phillips R.A."/>
        </authorList>
    </citation>
    <scope>DEVELOPMENTAL STAGE</scope>
</reference>
<reference key="6">
    <citation type="journal article" date="2005" name="Mol. Biol. Cell">
        <title>EAPP, a novel E2F binding protein that modulates E2F-dependent transcription.</title>
        <authorList>
            <person name="Novy M."/>
            <person name="Pohn R."/>
            <person name="Andorfer P."/>
            <person name="Novy-Weiland T."/>
            <person name="Galos B."/>
            <person name="Schwarzmayr L."/>
            <person name="Rotheneder H."/>
        </authorList>
    </citation>
    <scope>INTERACTION WITH EAPP</scope>
</reference>